<dbReference type="EMBL" id="CP000970">
    <property type="protein sequence ID" value="ACB15915.1"/>
    <property type="molecule type" value="Genomic_DNA"/>
</dbReference>
<dbReference type="RefSeq" id="WP_000921612.1">
    <property type="nucleotide sequence ID" value="NC_010498.1"/>
</dbReference>
<dbReference type="SMR" id="B1LLK3"/>
<dbReference type="KEGG" id="ecm:EcSMS35_2403"/>
<dbReference type="HOGENOM" id="CLU_030805_9_1_6"/>
<dbReference type="Proteomes" id="UP000007011">
    <property type="component" value="Chromosome"/>
</dbReference>
<dbReference type="CDD" id="cd00885">
    <property type="entry name" value="cinA"/>
    <property type="match status" value="1"/>
</dbReference>
<dbReference type="Gene3D" id="3.40.980.10">
    <property type="entry name" value="MoaB/Mog-like domain"/>
    <property type="match status" value="1"/>
</dbReference>
<dbReference type="HAMAP" id="MF_00226_B">
    <property type="entry name" value="CinA_B"/>
    <property type="match status" value="1"/>
</dbReference>
<dbReference type="InterPro" id="IPR050101">
    <property type="entry name" value="CinA"/>
</dbReference>
<dbReference type="InterPro" id="IPR036653">
    <property type="entry name" value="CinA-like_C"/>
</dbReference>
<dbReference type="InterPro" id="IPR008135">
    <property type="entry name" value="Competence-induced_CinA"/>
</dbReference>
<dbReference type="InterPro" id="IPR036425">
    <property type="entry name" value="MoaB/Mog-like_dom_sf"/>
</dbReference>
<dbReference type="InterPro" id="IPR001453">
    <property type="entry name" value="MoaB/Mog_dom"/>
</dbReference>
<dbReference type="NCBIfam" id="TIGR00200">
    <property type="entry name" value="cinA_nterm"/>
    <property type="match status" value="1"/>
</dbReference>
<dbReference type="NCBIfam" id="TIGR00177">
    <property type="entry name" value="molyb_syn"/>
    <property type="match status" value="1"/>
</dbReference>
<dbReference type="NCBIfam" id="NF002978">
    <property type="entry name" value="PRK03673.1"/>
    <property type="match status" value="1"/>
</dbReference>
<dbReference type="PANTHER" id="PTHR13939">
    <property type="entry name" value="NICOTINAMIDE-NUCLEOTIDE AMIDOHYDROLASE PNCC"/>
    <property type="match status" value="1"/>
</dbReference>
<dbReference type="PANTHER" id="PTHR13939:SF0">
    <property type="entry name" value="NMN AMIDOHYDROLASE-LIKE PROTEIN YFAY"/>
    <property type="match status" value="1"/>
</dbReference>
<dbReference type="Pfam" id="PF00994">
    <property type="entry name" value="MoCF_biosynth"/>
    <property type="match status" value="1"/>
</dbReference>
<dbReference type="PIRSF" id="PIRSF006728">
    <property type="entry name" value="CinA"/>
    <property type="match status" value="1"/>
</dbReference>
<dbReference type="SMART" id="SM00852">
    <property type="entry name" value="MoCF_biosynth"/>
    <property type="match status" value="1"/>
</dbReference>
<dbReference type="SUPFAM" id="SSF142433">
    <property type="entry name" value="CinA-like"/>
    <property type="match status" value="1"/>
</dbReference>
<dbReference type="SUPFAM" id="SSF53218">
    <property type="entry name" value="Molybdenum cofactor biosynthesis proteins"/>
    <property type="match status" value="1"/>
</dbReference>
<feature type="chain" id="PRO_1000118921" description="CinA-like protein">
    <location>
        <begin position="1"/>
        <end position="400"/>
    </location>
</feature>
<protein>
    <recommendedName>
        <fullName evidence="1">CinA-like protein</fullName>
    </recommendedName>
</protein>
<reference key="1">
    <citation type="journal article" date="2008" name="J. Bacteriol.">
        <title>Insights into the environmental resistance gene pool from the genome sequence of the multidrug-resistant environmental isolate Escherichia coli SMS-3-5.</title>
        <authorList>
            <person name="Fricke W.F."/>
            <person name="Wright M.S."/>
            <person name="Lindell A.H."/>
            <person name="Harkins D.M."/>
            <person name="Baker-Austin C."/>
            <person name="Ravel J."/>
            <person name="Stepanauskas R."/>
        </authorList>
    </citation>
    <scope>NUCLEOTIDE SEQUENCE [LARGE SCALE GENOMIC DNA]</scope>
    <source>
        <strain>SMS-3-5 / SECEC</strain>
    </source>
</reference>
<sequence length="400" mass="44259">MLKVEMLSTGDEVLHGQIVDTNAAWLADFFFHQGLPLSRRNTVGDNLDDLVTILRERSQHADVLIVNGGLGPTSDDLSALAAATAKGEGLVLHEAWLKEMERYFHERGRVMAPSNRKQAELPASAEFINNPVGTACGFAVQLNRCLMFFTPGVPSEFKVMVEHEILPRLRERFSLPQPPVCLRLTTFGRSESDLAQSLDSLQLPPGVTMGYRSSMPIIELKLTGPASEEQAMEKLWLDVKRVAGQSVIFEGTEGLPAQISRELQSRQFSLTLSEQFTGGLLALQLSRAGAPLLACEVVPSQEETLAQTAHWITERRANHFAGLALAVSGFENEHLNFALATPDGTFALRVRFSTTRYSQAIRQEVCAMMALNMLRRWLNDQDIASEHGWIEVVESMTLSV</sequence>
<evidence type="ECO:0000255" key="1">
    <source>
        <dbReference type="HAMAP-Rule" id="MF_00226"/>
    </source>
</evidence>
<name>CINAL_ECOSM</name>
<gene>
    <name type="ordered locus">EcSMS35_2403</name>
</gene>
<organism>
    <name type="scientific">Escherichia coli (strain SMS-3-5 / SECEC)</name>
    <dbReference type="NCBI Taxonomy" id="439855"/>
    <lineage>
        <taxon>Bacteria</taxon>
        <taxon>Pseudomonadati</taxon>
        <taxon>Pseudomonadota</taxon>
        <taxon>Gammaproteobacteria</taxon>
        <taxon>Enterobacterales</taxon>
        <taxon>Enterobacteriaceae</taxon>
        <taxon>Escherichia</taxon>
    </lineage>
</organism>
<comment type="similarity">
    <text evidence="1">Belongs to the CinA family.</text>
</comment>
<proteinExistence type="inferred from homology"/>
<accession>B1LLK3</accession>